<reference key="1">
    <citation type="journal article" date="1987" name="Nucleic Acids Res.">
        <title>Cloning, sequencing and expression of the Taq I restriction-modification system.</title>
        <authorList>
            <person name="Slatko B.E."/>
            <person name="Benner J.S."/>
            <person name="Moran L.S."/>
            <person name="Jager-Quinton T."/>
            <person name="Simcox T.G."/>
            <person name="van Cott E.M."/>
            <person name="Wilson G.G."/>
        </authorList>
    </citation>
    <scope>NUCLEOTIDE SEQUENCE [GENOMIC DNA]</scope>
    <scope>FUNCTION</scope>
    <source>
        <strain>ATCC 25104 / DSM 625 / JCM 10724 / NBRC 103206 / NCIMB 11243 / YT-1</strain>
    </source>
</reference>
<reference key="2">
    <citation type="journal article" date="1992" name="Gene">
        <title>The corrected nucleotide sequences of the TaqI restriction and modification enzymes reveal a thirteen-codon overlap.</title>
        <authorList>
            <person name="Barany F."/>
            <person name="Slatko B."/>
            <person name="Danzitz M."/>
            <person name="Cowburn D."/>
            <person name="Schildkraut I."/>
            <person name="Wilson G.G."/>
        </authorList>
    </citation>
    <scope>SEQUENCE REVISION</scope>
    <source>
        <strain>ATCC 25104 / DSM 625 / JCM 10724 / NBRC 103206 / NCIMB 11243 / YT-1</strain>
    </source>
</reference>
<reference key="3">
    <citation type="journal article" date="1999" name="Biochemistry">
        <title>Functional roles of the conserved aromatic amino acid residues at position 108 (motif IV) and position 196 (motif VIII) in base flipping and catalysis by the N6-adenine DNA methyltransferase from Thermus aquaticus.</title>
        <authorList>
            <person name="Pues H."/>
            <person name="Bleimling N."/>
            <person name="Holz B."/>
            <person name="Wolcke J."/>
            <person name="Weinhold E."/>
        </authorList>
    </citation>
    <scope>FUNCTION</scope>
    <scope>CATALYTIC ACTIVITY</scope>
    <scope>BIOPHYSICOCHEMICAL PROPERTIES</scope>
    <scope>MUTAGENESIS OF TYR-108 AND PHE-196</scope>
</reference>
<reference key="4">
    <citation type="journal article" date="2003" name="Nucleic Acids Res.">
        <title>A nomenclature for restriction enzymes, DNA methyltransferases, homing endonucleases and their genes.</title>
        <authorList>
            <person name="Roberts R.J."/>
            <person name="Belfort M."/>
            <person name="Bestor T."/>
            <person name="Bhagwat A.S."/>
            <person name="Bickle T.A."/>
            <person name="Bitinaite J."/>
            <person name="Blumenthal R.M."/>
            <person name="Degtyarev S.K."/>
            <person name="Dryden D.T."/>
            <person name="Dybvig K."/>
            <person name="Firman K."/>
            <person name="Gromova E.S."/>
            <person name="Gumport R.I."/>
            <person name="Halford S.E."/>
            <person name="Hattman S."/>
            <person name="Heitman J."/>
            <person name="Hornby D.P."/>
            <person name="Janulaitis A."/>
            <person name="Jeltsch A."/>
            <person name="Josephsen J."/>
            <person name="Kiss A."/>
            <person name="Klaenhammer T.R."/>
            <person name="Kobayashi I."/>
            <person name="Kong H."/>
            <person name="Krueger D.H."/>
            <person name="Lacks S."/>
            <person name="Marinus M.G."/>
            <person name="Miyahara M."/>
            <person name="Morgan R.D."/>
            <person name="Murray N.E."/>
            <person name="Nagaraja V."/>
            <person name="Piekarowicz A."/>
            <person name="Pingoud A."/>
            <person name="Raleigh E."/>
            <person name="Rao D.N."/>
            <person name="Reich N."/>
            <person name="Repin V.E."/>
            <person name="Selker E.U."/>
            <person name="Shaw P.C."/>
            <person name="Stein D.C."/>
            <person name="Stoddard B.L."/>
            <person name="Szybalski W."/>
            <person name="Trautner T.A."/>
            <person name="Van Etten J.L."/>
            <person name="Vitor J.M."/>
            <person name="Wilson G.G."/>
            <person name="Xu S.Y."/>
        </authorList>
    </citation>
    <scope>NOMENCLATURE</scope>
    <scope>SUBTYPE</scope>
</reference>
<reference key="5">
    <citation type="journal article" date="1994" name="Proc. Natl. Acad. Sci. U.S.A.">
        <title>Three-dimensional structure of the adenine-specific DNA methyltransferase M.Taq I in complex with the cofactor S-adenosylmethionine.</title>
        <authorList>
            <person name="Labahn J."/>
            <person name="Granzin J."/>
            <person name="Schluckebier G."/>
            <person name="Robinson D.P."/>
            <person name="Jack W.E."/>
            <person name="Schildkraut I."/>
            <person name="Saenger W."/>
        </authorList>
    </citation>
    <scope>X-RAY CRYSTALLOGRAPHY (2.4 ANGSTROMS) IN COMPLEX WITH S-ADENOSYLMETHIONINE</scope>
</reference>
<reference evidence="6 7 9" key="6">
    <citation type="journal article" date="1997" name="J. Mol. Biol.">
        <title>Differential binding of S-adenosylmethionine S-adenosylhomocysteine and sinefungin to the adenine-specific DNA methyltransferase M.TaqI.</title>
        <authorList>
            <person name="Schluckebier G."/>
            <person name="Kozak M."/>
            <person name="Bleimling N."/>
            <person name="Weinhold E."/>
            <person name="Saenger W."/>
        </authorList>
    </citation>
    <scope>X-RAY CRYSTALLOGRAPHY (2.6 ANGSTROMS) IN COMPLEX WITH S-ADENOSYLHOMOCYSTEINE AND SINEFUNGIN</scope>
    <scope>A REINTERPRETATION IN COMPLEX WITH S-ADENOSYLMETHIONINE</scope>
</reference>
<reference evidence="8" key="7">
    <citation type="journal article" date="2001" name="Nat. Struct. Biol.">
        <title>Structure of the N6-adenine DNA methyltransferase M.TaqI in complex with DNA and a cofactor analog.</title>
        <authorList>
            <person name="Goedecke K."/>
            <person name="Pignot M."/>
            <person name="Goody R.S."/>
            <person name="Scheidig A.J."/>
            <person name="Weinhold E."/>
        </authorList>
    </citation>
    <scope>X-RAY CRYSTALLOGRAPHY (2.0 ANGSTROMS) OF 21-413 IN COMPLEX WITH DNA</scope>
    <scope>DISCUSSION OF ENZYME MECHANISM</scope>
</reference>
<proteinExistence type="evidence at protein level"/>
<feature type="chain" id="PRO_0000087980" description="Type II methyltransferase M.TaqI">
    <location>
        <begin position="1"/>
        <end position="421"/>
    </location>
</feature>
<feature type="region of interest" description="Disordered" evidence="1">
    <location>
        <begin position="1"/>
        <end position="20"/>
    </location>
</feature>
<feature type="compositionally biased region" description="Low complexity" evidence="1">
    <location>
        <begin position="1"/>
        <end position="18"/>
    </location>
</feature>
<feature type="binding site" evidence="9">
    <location>
        <position position="23"/>
    </location>
    <ligand>
        <name>S-adenosyl-L-methionine</name>
        <dbReference type="ChEBI" id="CHEBI:59789"/>
    </ligand>
</feature>
<feature type="binding site" evidence="9">
    <location>
        <begin position="45"/>
        <end position="48"/>
    </location>
    <ligand>
        <name>S-adenosyl-L-methionine</name>
        <dbReference type="ChEBI" id="CHEBI:59789"/>
    </ligand>
</feature>
<feature type="binding site" evidence="9">
    <location>
        <position position="71"/>
    </location>
    <ligand>
        <name>S-adenosyl-L-methionine</name>
        <dbReference type="ChEBI" id="CHEBI:59789"/>
    </ligand>
</feature>
<feature type="binding site" evidence="9">
    <location>
        <position position="89"/>
    </location>
    <ligand>
        <name>S-adenosyl-L-methionine</name>
        <dbReference type="ChEBI" id="CHEBI:59789"/>
    </ligand>
</feature>
<feature type="binding site" evidence="9">
    <location>
        <position position="107"/>
    </location>
    <ligand>
        <name>S-adenosyl-L-methionine</name>
        <dbReference type="ChEBI" id="CHEBI:59789"/>
    </ligand>
</feature>
<feature type="site" description="Important for catalytic activity" evidence="9">
    <location>
        <position position="105"/>
    </location>
</feature>
<feature type="site" description="Important for catalytic activity; via amide nitrogen" evidence="9">
    <location>
        <position position="106"/>
    </location>
</feature>
<feature type="site" description="Important for catalytic activity" evidence="9">
    <location>
        <position position="108"/>
    </location>
</feature>
<feature type="mutagenesis site" description="Drastically reduces enzymatic activity; KM for both DNA and s-adenosylmethionine is not significantly changed." evidence="3">
    <original>Y</original>
    <variation>A</variation>
    <variation>G</variation>
    <location>
        <position position="108"/>
    </location>
</feature>
<feature type="mutagenesis site" description="Essentially wild-type activity." evidence="3">
    <original>Y</original>
    <variation>F</variation>
    <variation>W</variation>
    <location>
        <position position="108"/>
    </location>
</feature>
<feature type="mutagenesis site" description="Drastically reduces enzymatic activity; KM for both DNA and s-adenosylmethionine is not significantly changed." evidence="3">
    <original>F</original>
    <variation>A</variation>
    <location>
        <position position="196"/>
    </location>
</feature>
<feature type="mutagenesis site" description="Essentially wild-type activity." evidence="3">
    <original>F</original>
    <variation>W</variation>
    <location>
        <position position="196"/>
    </location>
</feature>
<feature type="sequence conflict" description="In Ref. 1; CAA68551." evidence="5" ref="1">
    <original>S</original>
    <variation>A</variation>
    <location>
        <position position="13"/>
    </location>
</feature>
<feature type="sequence conflict" description="In Ref. 1; AAA27506." evidence="5" ref="1">
    <original>A</original>
    <variation>G</variation>
    <location>
        <position position="64"/>
    </location>
</feature>
<feature type="helix" evidence="11">
    <location>
        <begin position="25"/>
        <end position="34"/>
    </location>
</feature>
<feature type="strand" evidence="11">
    <location>
        <begin position="42"/>
        <end position="46"/>
    </location>
</feature>
<feature type="helix" evidence="11">
    <location>
        <begin position="52"/>
        <end position="61"/>
    </location>
</feature>
<feature type="strand" evidence="11">
    <location>
        <begin position="65"/>
        <end position="72"/>
    </location>
</feature>
<feature type="turn" evidence="11">
    <location>
        <begin position="74"/>
        <end position="76"/>
    </location>
</feature>
<feature type="strand" evidence="11">
    <location>
        <begin position="83"/>
        <end position="88"/>
    </location>
</feature>
<feature type="helix" evidence="11">
    <location>
        <begin position="90"/>
        <end position="92"/>
    </location>
</feature>
<feature type="strand" evidence="11">
    <location>
        <begin position="99"/>
        <end position="104"/>
    </location>
</feature>
<feature type="turn" evidence="11">
    <location>
        <begin position="114"/>
        <end position="116"/>
    </location>
</feature>
<feature type="helix" evidence="11">
    <location>
        <begin position="123"/>
        <end position="132"/>
    </location>
</feature>
<feature type="helix" evidence="11">
    <location>
        <begin position="142"/>
        <end position="153"/>
    </location>
</feature>
<feature type="strand" evidence="11">
    <location>
        <begin position="154"/>
        <end position="165"/>
    </location>
</feature>
<feature type="helix" evidence="11">
    <location>
        <begin position="166"/>
        <end position="169"/>
    </location>
</feature>
<feature type="helix" evidence="11">
    <location>
        <begin position="172"/>
        <end position="174"/>
    </location>
</feature>
<feature type="helix" evidence="11">
    <location>
        <begin position="175"/>
        <end position="184"/>
    </location>
</feature>
<feature type="strand" evidence="11">
    <location>
        <begin position="185"/>
        <end position="194"/>
    </location>
</feature>
<feature type="strand" evidence="10">
    <location>
        <begin position="196"/>
        <end position="198"/>
    </location>
</feature>
<feature type="strand" evidence="11">
    <location>
        <begin position="203"/>
        <end position="212"/>
    </location>
</feature>
<feature type="strand" evidence="11">
    <location>
        <begin position="215"/>
        <end position="223"/>
    </location>
</feature>
<feature type="strand" evidence="11">
    <location>
        <begin position="226"/>
        <end position="235"/>
    </location>
</feature>
<feature type="helix" evidence="11">
    <location>
        <begin position="248"/>
        <end position="255"/>
    </location>
</feature>
<feature type="strand" evidence="11">
    <location>
        <begin position="257"/>
        <end position="259"/>
    </location>
</feature>
<feature type="helix" evidence="11">
    <location>
        <begin position="260"/>
        <end position="263"/>
    </location>
</feature>
<feature type="strand" evidence="11">
    <location>
        <begin position="264"/>
        <end position="268"/>
    </location>
</feature>
<feature type="helix" evidence="11">
    <location>
        <begin position="272"/>
        <end position="277"/>
    </location>
</feature>
<feature type="strand" evidence="11">
    <location>
        <begin position="282"/>
        <end position="284"/>
    </location>
</feature>
<feature type="strand" evidence="11">
    <location>
        <begin position="289"/>
        <end position="291"/>
    </location>
</feature>
<feature type="helix" evidence="11">
    <location>
        <begin position="295"/>
        <end position="297"/>
    </location>
</feature>
<feature type="strand" evidence="11">
    <location>
        <begin position="309"/>
        <end position="311"/>
    </location>
</feature>
<feature type="strand" evidence="11">
    <location>
        <begin position="313"/>
        <end position="315"/>
    </location>
</feature>
<feature type="helix" evidence="11">
    <location>
        <begin position="316"/>
        <end position="321"/>
    </location>
</feature>
<feature type="helix" evidence="11">
    <location>
        <begin position="324"/>
        <end position="327"/>
    </location>
</feature>
<feature type="strand" evidence="11">
    <location>
        <begin position="330"/>
        <end position="333"/>
    </location>
</feature>
<feature type="strand" evidence="11">
    <location>
        <begin position="335"/>
        <end position="340"/>
    </location>
</feature>
<feature type="strand" evidence="11">
    <location>
        <begin position="343"/>
        <end position="348"/>
    </location>
</feature>
<feature type="strand" evidence="11">
    <location>
        <begin position="352"/>
        <end position="360"/>
    </location>
</feature>
<feature type="strand" evidence="11">
    <location>
        <begin position="364"/>
        <end position="366"/>
    </location>
</feature>
<feature type="helix" evidence="11">
    <location>
        <begin position="368"/>
        <end position="375"/>
    </location>
</feature>
<feature type="helix" evidence="11">
    <location>
        <begin position="378"/>
        <end position="388"/>
    </location>
</feature>
<feature type="strand" evidence="11">
    <location>
        <begin position="391"/>
        <end position="394"/>
    </location>
</feature>
<feature type="helix" evidence="11">
    <location>
        <begin position="397"/>
        <end position="400"/>
    </location>
</feature>
<feature type="strand" evidence="10">
    <location>
        <begin position="404"/>
        <end position="406"/>
    </location>
</feature>
<feature type="turn" evidence="11">
    <location>
        <begin position="407"/>
        <end position="409"/>
    </location>
</feature>
<feature type="strand" evidence="11">
    <location>
        <begin position="410"/>
        <end position="412"/>
    </location>
</feature>
<organism>
    <name type="scientific">Thermus aquaticus</name>
    <dbReference type="NCBI Taxonomy" id="271"/>
    <lineage>
        <taxon>Bacteria</taxon>
        <taxon>Thermotogati</taxon>
        <taxon>Deinococcota</taxon>
        <taxon>Deinococci</taxon>
        <taxon>Thermales</taxon>
        <taxon>Thermaceae</taxon>
        <taxon>Thermus</taxon>
    </lineage>
</organism>
<accession>P14385</accession>
<protein>
    <recommendedName>
        <fullName evidence="4">Type II methyltransferase M.TaqI</fullName>
        <shortName evidence="4">M.TaqI</shortName>
        <ecNumber evidence="3">2.1.1.72</ecNumber>
    </recommendedName>
    <alternativeName>
        <fullName>Adenine-specific methyltransferase TaqI</fullName>
    </alternativeName>
    <alternativeName>
        <fullName>Modification methylase TaqI</fullName>
    </alternativeName>
</protein>
<keyword id="KW-0002">3D-structure</keyword>
<keyword id="KW-0238">DNA-binding</keyword>
<keyword id="KW-0489">Methyltransferase</keyword>
<keyword id="KW-0680">Restriction system</keyword>
<keyword id="KW-0949">S-adenosyl-L-methionine</keyword>
<keyword id="KW-0808">Transferase</keyword>
<name>MTTA_THEAQ</name>
<sequence>MGLPPLLSLPSNSAPRSLGRVETPPEVVDFMVSLAEAPRGGRVLEPACAHGPFLRAFREAHGTAYRFVGVEIDPKALDLPPWAEGILADFLLWEPGEAFDLILGNPPYGIVGEASKYPIHVFKAVKDLYKKAFSTWKGKYNLYGAFLEKAVRLLKPGGVLVFVVPATWLVLEDFALLREFLAREGKTSVYYLGEVFPQKKVSAVVIRFQKSGKGLSLWDTQESESGFTPILWAEYPHWEGEIIRFETEETRKLEISGMPLGDLFHIRFAARSPEFKKHPAVRKEPGPGLVPVLTGRNLKPGWVDYEKNHSGLWMPKERAKELRDFYATPHLVVAHTKGTRVVAAWDERAYPWREEFHLLPKEGVRLDPSSLVQWLNSEAMQKHVRTLYRDFVPHLTLRMLERLPVRREYGFHTSPESARNF</sequence>
<comment type="function">
    <text evidence="2 3 4">A gamma subtype methylase that recognizes the double-stranded sequence 5'-TCGA-3', methylates A-4 on both strands and protects the DNA from cleavage by the TaqI endonuclease.</text>
</comment>
<comment type="catalytic activity">
    <reaction evidence="3">
        <text>a 2'-deoxyadenosine in DNA + S-adenosyl-L-methionine = an N(6)-methyl-2'-deoxyadenosine in DNA + S-adenosyl-L-homocysteine + H(+)</text>
        <dbReference type="Rhea" id="RHEA:15197"/>
        <dbReference type="Rhea" id="RHEA-COMP:12418"/>
        <dbReference type="Rhea" id="RHEA-COMP:12419"/>
        <dbReference type="ChEBI" id="CHEBI:15378"/>
        <dbReference type="ChEBI" id="CHEBI:57856"/>
        <dbReference type="ChEBI" id="CHEBI:59789"/>
        <dbReference type="ChEBI" id="CHEBI:90615"/>
        <dbReference type="ChEBI" id="CHEBI:90616"/>
        <dbReference type="EC" id="2.1.1.72"/>
    </reaction>
</comment>
<comment type="biophysicochemical properties">
    <kinetics>
        <KM evidence="3">0.6 uM for DNA</KM>
        <KM evidence="3">3.7 uM for S-adenosylmethionine</KM>
    </kinetics>
</comment>
<comment type="similarity">
    <text evidence="5">Belongs to the N(4)/N(6)-methyltransferase family.</text>
</comment>
<dbReference type="EC" id="2.1.1.72" evidence="3"/>
<dbReference type="EMBL" id="Y00499">
    <property type="protein sequence ID" value="CAA68551.1"/>
    <property type="status" value="ALT_SEQ"/>
    <property type="molecule type" value="Genomic_DNA"/>
</dbReference>
<dbReference type="EMBL" id="M76681">
    <property type="protein sequence ID" value="AAA27506.1"/>
    <property type="molecule type" value="Genomic_DNA"/>
</dbReference>
<dbReference type="PIR" id="JN0257">
    <property type="entry name" value="JN0257"/>
</dbReference>
<dbReference type="PDB" id="1AQI">
    <property type="method" value="X-ray"/>
    <property type="resolution" value="2.60 A"/>
    <property type="chains" value="A/B=1-421"/>
</dbReference>
<dbReference type="PDB" id="1AQJ">
    <property type="method" value="X-ray"/>
    <property type="resolution" value="2.60 A"/>
    <property type="chains" value="A/B=1-421"/>
</dbReference>
<dbReference type="PDB" id="1G38">
    <property type="method" value="X-ray"/>
    <property type="resolution" value="2.00 A"/>
    <property type="chains" value="A/D=21-413"/>
</dbReference>
<dbReference type="PDB" id="2ADM">
    <property type="method" value="X-ray"/>
    <property type="resolution" value="2.60 A"/>
    <property type="chains" value="A/B=1-421"/>
</dbReference>
<dbReference type="PDB" id="2IBS">
    <property type="method" value="X-ray"/>
    <property type="resolution" value="2.40 A"/>
    <property type="chains" value="A/D=1-421"/>
</dbReference>
<dbReference type="PDB" id="2IBT">
    <property type="method" value="X-ray"/>
    <property type="resolution" value="1.70 A"/>
    <property type="chains" value="A/D=1-421"/>
</dbReference>
<dbReference type="PDB" id="2IH2">
    <property type="method" value="X-ray"/>
    <property type="resolution" value="1.61 A"/>
    <property type="chains" value="A/D=1-421"/>
</dbReference>
<dbReference type="PDB" id="2IH4">
    <property type="method" value="X-ray"/>
    <property type="resolution" value="2.10 A"/>
    <property type="chains" value="A/D=1-421"/>
</dbReference>
<dbReference type="PDB" id="2IH5">
    <property type="method" value="X-ray"/>
    <property type="resolution" value="1.80 A"/>
    <property type="chains" value="A=1-421"/>
</dbReference>
<dbReference type="PDB" id="2JG3">
    <property type="method" value="X-ray"/>
    <property type="resolution" value="1.90 A"/>
    <property type="chains" value="A/D=1-421"/>
</dbReference>
<dbReference type="PDB" id="2NP6">
    <property type="method" value="X-ray"/>
    <property type="resolution" value="2.10 A"/>
    <property type="chains" value="A/D=1-421"/>
</dbReference>
<dbReference type="PDB" id="2NP7">
    <property type="method" value="X-ray"/>
    <property type="resolution" value="1.90 A"/>
    <property type="chains" value="A=1-421"/>
</dbReference>
<dbReference type="PDBsum" id="1AQI"/>
<dbReference type="PDBsum" id="1AQJ"/>
<dbReference type="PDBsum" id="1G38"/>
<dbReference type="PDBsum" id="2ADM"/>
<dbReference type="PDBsum" id="2IBS"/>
<dbReference type="PDBsum" id="2IBT"/>
<dbReference type="PDBsum" id="2IH2"/>
<dbReference type="PDBsum" id="2IH4"/>
<dbReference type="PDBsum" id="2IH5"/>
<dbReference type="PDBsum" id="2JG3"/>
<dbReference type="PDBsum" id="2NP6"/>
<dbReference type="PDBsum" id="2NP7"/>
<dbReference type="SMR" id="P14385"/>
<dbReference type="DrugBank" id="DB01752">
    <property type="generic name" value="S-adenosyl-L-homocysteine"/>
</dbReference>
<dbReference type="DrugBank" id="DB01910">
    <property type="generic name" value="Sinefungin"/>
</dbReference>
<dbReference type="BRENDA" id="2.1.1.72">
    <property type="organism ID" value="6334"/>
</dbReference>
<dbReference type="SABIO-RK" id="P14385"/>
<dbReference type="EvolutionaryTrace" id="P14385"/>
<dbReference type="PRO" id="PR:P14385"/>
<dbReference type="GO" id="GO:0003677">
    <property type="term" value="F:DNA binding"/>
    <property type="evidence" value="ECO:0007669"/>
    <property type="project" value="UniProtKB-KW"/>
</dbReference>
<dbReference type="GO" id="GO:0009007">
    <property type="term" value="F:site-specific DNA-methyltransferase (adenine-specific) activity"/>
    <property type="evidence" value="ECO:0007669"/>
    <property type="project" value="UniProtKB-EC"/>
</dbReference>
<dbReference type="GO" id="GO:0009307">
    <property type="term" value="P:DNA restriction-modification system"/>
    <property type="evidence" value="ECO:0007669"/>
    <property type="project" value="UniProtKB-KW"/>
</dbReference>
<dbReference type="GO" id="GO:0032259">
    <property type="term" value="P:methylation"/>
    <property type="evidence" value="ECO:0007669"/>
    <property type="project" value="UniProtKB-KW"/>
</dbReference>
<dbReference type="CDD" id="cd02440">
    <property type="entry name" value="AdoMet_MTases"/>
    <property type="match status" value="1"/>
</dbReference>
<dbReference type="Gene3D" id="3.90.220.10">
    <property type="entry name" value="Adenine-n6-DNA-methyltransferase Taqi, Chain A, domain 2"/>
    <property type="match status" value="1"/>
</dbReference>
<dbReference type="Gene3D" id="3.40.50.150">
    <property type="entry name" value="Vaccinia Virus protein VP39"/>
    <property type="match status" value="1"/>
</dbReference>
<dbReference type="InterPro" id="IPR002052">
    <property type="entry name" value="DNA_methylase_N6_adenine_CS"/>
</dbReference>
<dbReference type="InterPro" id="IPR011639">
    <property type="entry name" value="MethylTrfase_TaqI-like_dom"/>
</dbReference>
<dbReference type="InterPro" id="IPR050953">
    <property type="entry name" value="N4_N6_ade-DNA_methylase"/>
</dbReference>
<dbReference type="InterPro" id="IPR021188">
    <property type="entry name" value="N6_DNA_MeTrfase_TaqI"/>
</dbReference>
<dbReference type="InterPro" id="IPR023135">
    <property type="entry name" value="N6_DNA_MeTrfase_TaqI_C"/>
</dbReference>
<dbReference type="InterPro" id="IPR029063">
    <property type="entry name" value="SAM-dependent_MTases_sf"/>
</dbReference>
<dbReference type="InterPro" id="IPR025931">
    <property type="entry name" value="TaqI_C"/>
</dbReference>
<dbReference type="PANTHER" id="PTHR33841">
    <property type="entry name" value="DNA METHYLTRANSFERASE YEEA-RELATED"/>
    <property type="match status" value="1"/>
</dbReference>
<dbReference type="PANTHER" id="PTHR33841:SF6">
    <property type="entry name" value="TYPE II METHYLTRANSFERASE M.HINDII"/>
    <property type="match status" value="1"/>
</dbReference>
<dbReference type="Pfam" id="PF07669">
    <property type="entry name" value="Eco57I"/>
    <property type="match status" value="1"/>
</dbReference>
<dbReference type="Pfam" id="PF12950">
    <property type="entry name" value="TaqI_C"/>
    <property type="match status" value="1"/>
</dbReference>
<dbReference type="PIRSF" id="PIRSF037236">
    <property type="entry name" value="Ade-sp_methyltransferase_TaqI"/>
    <property type="match status" value="1"/>
</dbReference>
<dbReference type="PRINTS" id="PR00507">
    <property type="entry name" value="N12N6MTFRASE"/>
</dbReference>
<dbReference type="SUPFAM" id="SSF116734">
    <property type="entry name" value="DNA methylase specificity domain"/>
    <property type="match status" value="1"/>
</dbReference>
<dbReference type="SUPFAM" id="SSF53335">
    <property type="entry name" value="S-adenosyl-L-methionine-dependent methyltransferases"/>
    <property type="match status" value="1"/>
</dbReference>
<dbReference type="PROSITE" id="PS00092">
    <property type="entry name" value="N6_MTASE"/>
    <property type="match status" value="1"/>
</dbReference>
<gene>
    <name type="primary">taqIM</name>
</gene>
<evidence type="ECO:0000256" key="1">
    <source>
        <dbReference type="SAM" id="MobiDB-lite"/>
    </source>
</evidence>
<evidence type="ECO:0000269" key="2">
    <source>
    </source>
</evidence>
<evidence type="ECO:0000269" key="3">
    <source>
    </source>
</evidence>
<evidence type="ECO:0000303" key="4">
    <source>
    </source>
</evidence>
<evidence type="ECO:0000305" key="5"/>
<evidence type="ECO:0007744" key="6">
    <source>
        <dbReference type="PDB" id="1AQI"/>
    </source>
</evidence>
<evidence type="ECO:0007744" key="7">
    <source>
        <dbReference type="PDB" id="1AQJ"/>
    </source>
</evidence>
<evidence type="ECO:0007744" key="8">
    <source>
        <dbReference type="PDB" id="1G38"/>
    </source>
</evidence>
<evidence type="ECO:0007744" key="9">
    <source>
        <dbReference type="PDB" id="2ADM"/>
    </source>
</evidence>
<evidence type="ECO:0007829" key="10">
    <source>
        <dbReference type="PDB" id="1AQI"/>
    </source>
</evidence>
<evidence type="ECO:0007829" key="11">
    <source>
        <dbReference type="PDB" id="2IH2"/>
    </source>
</evidence>